<name>TRUA_PYRNV</name>
<gene>
    <name evidence="1" type="primary">truA</name>
    <name type="ordered locus">Tneu_0213</name>
</gene>
<sequence length="255" mass="28392">MPYLYRIAYDGTLFYGFTGHPRSLEPHLRRALGDVLGRGSRTDPGVSAVGNVVMTSAKVQPAAANSKLPRGVWVWAAAEVPEGFNPRRARSRHYLYVAPHWGEDLDSMREAAELLAGTHDYASFVQRRGEPASTVTTIFSITVETRGDLVFLHFVGRGFRNKMIRKLAWAILAAGRGVLRKRDIADLLERPKPGAVPSAPAEGLVLLDIDYGVEFQVDYPSLRKAYRYFLWRYRYAAAHAAVFKAAGEALAAWEE</sequence>
<evidence type="ECO:0000255" key="1">
    <source>
        <dbReference type="HAMAP-Rule" id="MF_00171"/>
    </source>
</evidence>
<dbReference type="EC" id="5.4.99.12" evidence="1"/>
<dbReference type="EMBL" id="CP001014">
    <property type="protein sequence ID" value="ACB39168.1"/>
    <property type="molecule type" value="Genomic_DNA"/>
</dbReference>
<dbReference type="RefSeq" id="WP_012349589.1">
    <property type="nucleotide sequence ID" value="NC_010525.1"/>
</dbReference>
<dbReference type="SMR" id="B1YAT9"/>
<dbReference type="STRING" id="444157.Tneu_0213"/>
<dbReference type="GeneID" id="6164971"/>
<dbReference type="KEGG" id="tne:Tneu_0213"/>
<dbReference type="eggNOG" id="arCOG04449">
    <property type="taxonomic scope" value="Archaea"/>
</dbReference>
<dbReference type="HOGENOM" id="CLU_014673_4_2_2"/>
<dbReference type="OrthoDB" id="25720at2157"/>
<dbReference type="Proteomes" id="UP000001694">
    <property type="component" value="Chromosome"/>
</dbReference>
<dbReference type="GO" id="GO:0003723">
    <property type="term" value="F:RNA binding"/>
    <property type="evidence" value="ECO:0007669"/>
    <property type="project" value="InterPro"/>
</dbReference>
<dbReference type="GO" id="GO:0160147">
    <property type="term" value="F:tRNA pseudouridine(38-40) synthase activity"/>
    <property type="evidence" value="ECO:0007669"/>
    <property type="project" value="UniProtKB-EC"/>
</dbReference>
<dbReference type="GO" id="GO:0031119">
    <property type="term" value="P:tRNA pseudouridine synthesis"/>
    <property type="evidence" value="ECO:0007669"/>
    <property type="project" value="UniProtKB-UniRule"/>
</dbReference>
<dbReference type="Gene3D" id="3.30.70.660">
    <property type="entry name" value="Pseudouridine synthase I, catalytic domain, C-terminal subdomain"/>
    <property type="match status" value="1"/>
</dbReference>
<dbReference type="Gene3D" id="3.30.70.580">
    <property type="entry name" value="Pseudouridine synthase I, catalytic domain, N-terminal subdomain"/>
    <property type="match status" value="1"/>
</dbReference>
<dbReference type="HAMAP" id="MF_00171">
    <property type="entry name" value="TruA"/>
    <property type="match status" value="1"/>
</dbReference>
<dbReference type="InterPro" id="IPR020103">
    <property type="entry name" value="PsdUridine_synth_cat_dom_sf"/>
</dbReference>
<dbReference type="InterPro" id="IPR001406">
    <property type="entry name" value="PsdUridine_synth_TruA"/>
</dbReference>
<dbReference type="InterPro" id="IPR020097">
    <property type="entry name" value="PsdUridine_synth_TruA_a/b_dom"/>
</dbReference>
<dbReference type="InterPro" id="IPR020095">
    <property type="entry name" value="PsdUridine_synth_TruA_C"/>
</dbReference>
<dbReference type="InterPro" id="IPR020094">
    <property type="entry name" value="TruA/RsuA/RluB/E/F_N"/>
</dbReference>
<dbReference type="PANTHER" id="PTHR11142">
    <property type="entry name" value="PSEUDOURIDYLATE SYNTHASE"/>
    <property type="match status" value="1"/>
</dbReference>
<dbReference type="PANTHER" id="PTHR11142:SF0">
    <property type="entry name" value="TRNA PSEUDOURIDINE SYNTHASE-LIKE 1"/>
    <property type="match status" value="1"/>
</dbReference>
<dbReference type="Pfam" id="PF01416">
    <property type="entry name" value="PseudoU_synth_1"/>
    <property type="match status" value="1"/>
</dbReference>
<dbReference type="PIRSF" id="PIRSF001430">
    <property type="entry name" value="tRNA_psdUrid_synth"/>
    <property type="match status" value="1"/>
</dbReference>
<dbReference type="SUPFAM" id="SSF55120">
    <property type="entry name" value="Pseudouridine synthase"/>
    <property type="match status" value="1"/>
</dbReference>
<reference key="1">
    <citation type="submission" date="2008-03" db="EMBL/GenBank/DDBJ databases">
        <title>Complete sequence of Thermoproteus neutrophilus V24Sta.</title>
        <authorList>
            <consortium name="US DOE Joint Genome Institute"/>
            <person name="Copeland A."/>
            <person name="Lucas S."/>
            <person name="Lapidus A."/>
            <person name="Glavina del Rio T."/>
            <person name="Dalin E."/>
            <person name="Tice H."/>
            <person name="Bruce D."/>
            <person name="Goodwin L."/>
            <person name="Pitluck S."/>
            <person name="Sims D."/>
            <person name="Brettin T."/>
            <person name="Detter J.C."/>
            <person name="Han C."/>
            <person name="Kuske C.R."/>
            <person name="Schmutz J."/>
            <person name="Larimer F."/>
            <person name="Land M."/>
            <person name="Hauser L."/>
            <person name="Kyrpides N."/>
            <person name="Mikhailova N."/>
            <person name="Biddle J.F."/>
            <person name="Zhang Z."/>
            <person name="Fitz-Gibbon S.T."/>
            <person name="Lowe T.M."/>
            <person name="Saltikov C."/>
            <person name="House C.H."/>
            <person name="Richardson P."/>
        </authorList>
    </citation>
    <scope>NUCLEOTIDE SEQUENCE [LARGE SCALE GENOMIC DNA]</scope>
    <source>
        <strain>DSM 2338 / JCM 9278 / NBRC 100436 / V24Sta</strain>
    </source>
</reference>
<feature type="chain" id="PRO_1000097796" description="tRNA pseudouridine synthase A">
    <location>
        <begin position="1"/>
        <end position="255"/>
    </location>
</feature>
<feature type="active site" description="Nucleophile" evidence="1">
    <location>
        <position position="43"/>
    </location>
</feature>
<feature type="binding site" evidence="1">
    <location>
        <position position="94"/>
    </location>
    <ligand>
        <name>substrate</name>
    </ligand>
</feature>
<comment type="function">
    <text evidence="1">Formation of pseudouridine at positions 38, 39 and 40 in the anticodon stem and loop of transfer RNAs.</text>
</comment>
<comment type="catalytic activity">
    <reaction evidence="1">
        <text>uridine(38/39/40) in tRNA = pseudouridine(38/39/40) in tRNA</text>
        <dbReference type="Rhea" id="RHEA:22376"/>
        <dbReference type="Rhea" id="RHEA-COMP:10085"/>
        <dbReference type="Rhea" id="RHEA-COMP:10087"/>
        <dbReference type="ChEBI" id="CHEBI:65314"/>
        <dbReference type="ChEBI" id="CHEBI:65315"/>
        <dbReference type="EC" id="5.4.99.12"/>
    </reaction>
</comment>
<comment type="similarity">
    <text evidence="1">Belongs to the tRNA pseudouridine synthase TruA family.</text>
</comment>
<keyword id="KW-0413">Isomerase</keyword>
<keyword id="KW-0819">tRNA processing</keyword>
<protein>
    <recommendedName>
        <fullName evidence="1">tRNA pseudouridine synthase A</fullName>
        <ecNumber evidence="1">5.4.99.12</ecNumber>
    </recommendedName>
    <alternativeName>
        <fullName evidence="1">tRNA pseudouridine(38-40) synthase</fullName>
    </alternativeName>
    <alternativeName>
        <fullName evidence="1">tRNA pseudouridylate synthase I</fullName>
    </alternativeName>
    <alternativeName>
        <fullName evidence="1">tRNA-uridine isomerase I</fullName>
    </alternativeName>
</protein>
<organism>
    <name type="scientific">Pyrobaculum neutrophilum (strain DSM 2338 / JCM 9278 / NBRC 100436 / V24Sta)</name>
    <name type="common">Thermoproteus neutrophilus</name>
    <dbReference type="NCBI Taxonomy" id="444157"/>
    <lineage>
        <taxon>Archaea</taxon>
        <taxon>Thermoproteota</taxon>
        <taxon>Thermoprotei</taxon>
        <taxon>Thermoproteales</taxon>
        <taxon>Thermoproteaceae</taxon>
        <taxon>Pyrobaculum</taxon>
    </lineage>
</organism>
<proteinExistence type="inferred from homology"/>
<accession>B1YAT9</accession>